<proteinExistence type="inferred from homology"/>
<keyword id="KW-0350">Heme biosynthesis</keyword>
<keyword id="KW-0627">Porphyrin biosynthesis</keyword>
<keyword id="KW-1185">Reference proteome</keyword>
<keyword id="KW-0808">Transferase</keyword>
<dbReference type="EC" id="2.5.1.61"/>
<dbReference type="EMBL" id="BX842615">
    <property type="protein sequence ID" value="CAE76093.1"/>
    <property type="molecule type" value="Genomic_DNA"/>
</dbReference>
<dbReference type="EMBL" id="CM002240">
    <property type="protein sequence ID" value="ESA42329.1"/>
    <property type="molecule type" value="Genomic_DNA"/>
</dbReference>
<dbReference type="EMBL" id="CM002240">
    <property type="protein sequence ID" value="ESA42330.1"/>
    <property type="molecule type" value="Genomic_DNA"/>
</dbReference>
<dbReference type="RefSeq" id="XP_011394781.1">
    <property type="nucleotide sequence ID" value="XM_011396479.1"/>
</dbReference>
<dbReference type="RefSeq" id="XP_011394782.1">
    <property type="nucleotide sequence ID" value="XM_011396480.1"/>
</dbReference>
<dbReference type="SMR" id="Q6MW51"/>
<dbReference type="FunCoup" id="Q6MW51">
    <property type="interactions" value="641"/>
</dbReference>
<dbReference type="STRING" id="367110.Q6MW51"/>
<dbReference type="PaxDb" id="5141-EFNCRP00000008809"/>
<dbReference type="EnsemblFungi" id="ESA42329">
    <property type="protein sequence ID" value="ESA42329"/>
    <property type="gene ID" value="NCU10292"/>
</dbReference>
<dbReference type="EnsemblFungi" id="ESA42330">
    <property type="protein sequence ID" value="ESA42330"/>
    <property type="gene ID" value="NCU10292"/>
</dbReference>
<dbReference type="GeneID" id="5847103"/>
<dbReference type="KEGG" id="ncr:NCU10292"/>
<dbReference type="VEuPathDB" id="FungiDB:NCU10292"/>
<dbReference type="HOGENOM" id="CLU_019704_0_2_1"/>
<dbReference type="InParanoid" id="Q6MW51"/>
<dbReference type="OMA" id="LWQANHI"/>
<dbReference type="OrthoDB" id="564646at2759"/>
<dbReference type="UniPathway" id="UPA00251">
    <property type="reaction ID" value="UER00319"/>
</dbReference>
<dbReference type="Proteomes" id="UP000001805">
    <property type="component" value="Chromosome 2, Linkage Group V"/>
</dbReference>
<dbReference type="GO" id="GO:0005737">
    <property type="term" value="C:cytoplasm"/>
    <property type="evidence" value="ECO:0000318"/>
    <property type="project" value="GO_Central"/>
</dbReference>
<dbReference type="GO" id="GO:0004418">
    <property type="term" value="F:hydroxymethylbilane synthase activity"/>
    <property type="evidence" value="ECO:0000318"/>
    <property type="project" value="GO_Central"/>
</dbReference>
<dbReference type="GO" id="GO:0006783">
    <property type="term" value="P:heme biosynthetic process"/>
    <property type="evidence" value="ECO:0000318"/>
    <property type="project" value="GO_Central"/>
</dbReference>
<dbReference type="GO" id="GO:0006782">
    <property type="term" value="P:protoporphyrinogen IX biosynthetic process"/>
    <property type="evidence" value="ECO:0007669"/>
    <property type="project" value="UniProtKB-UniPathway"/>
</dbReference>
<dbReference type="CDD" id="cd13645">
    <property type="entry name" value="PBP2_HuPBGD_like"/>
    <property type="match status" value="1"/>
</dbReference>
<dbReference type="FunFam" id="3.30.160.40:FF:000002">
    <property type="entry name" value="Porphobilinogen deaminase"/>
    <property type="match status" value="1"/>
</dbReference>
<dbReference type="FunFam" id="3.40.190.10:FF:000005">
    <property type="entry name" value="Porphobilinogen deaminase"/>
    <property type="match status" value="1"/>
</dbReference>
<dbReference type="FunFam" id="3.40.190.10:FF:000086">
    <property type="entry name" value="Probable porphobilinogen deaminase"/>
    <property type="match status" value="1"/>
</dbReference>
<dbReference type="Gene3D" id="3.40.190.10">
    <property type="entry name" value="Periplasmic binding protein-like II"/>
    <property type="match status" value="2"/>
</dbReference>
<dbReference type="Gene3D" id="3.30.160.40">
    <property type="entry name" value="Porphobilinogen deaminase, C-terminal domain"/>
    <property type="match status" value="1"/>
</dbReference>
<dbReference type="HAMAP" id="MF_00260">
    <property type="entry name" value="Porphobil_deam"/>
    <property type="match status" value="1"/>
</dbReference>
<dbReference type="InterPro" id="IPR000860">
    <property type="entry name" value="HemC"/>
</dbReference>
<dbReference type="InterPro" id="IPR022419">
    <property type="entry name" value="Porphobilin_deaminase_cofac_BS"/>
</dbReference>
<dbReference type="InterPro" id="IPR022417">
    <property type="entry name" value="Porphobilin_deaminase_N"/>
</dbReference>
<dbReference type="InterPro" id="IPR022418">
    <property type="entry name" value="Porphobilinogen_deaminase_C"/>
</dbReference>
<dbReference type="InterPro" id="IPR036803">
    <property type="entry name" value="Porphobilinogen_deaminase_C_sf"/>
</dbReference>
<dbReference type="NCBIfam" id="TIGR00212">
    <property type="entry name" value="hemC"/>
    <property type="match status" value="1"/>
</dbReference>
<dbReference type="PANTHER" id="PTHR11557">
    <property type="entry name" value="PORPHOBILINOGEN DEAMINASE"/>
    <property type="match status" value="1"/>
</dbReference>
<dbReference type="PANTHER" id="PTHR11557:SF0">
    <property type="entry name" value="PORPHOBILINOGEN DEAMINASE"/>
    <property type="match status" value="1"/>
</dbReference>
<dbReference type="Pfam" id="PF01379">
    <property type="entry name" value="Porphobil_deam"/>
    <property type="match status" value="1"/>
</dbReference>
<dbReference type="Pfam" id="PF03900">
    <property type="entry name" value="Porphobil_deamC"/>
    <property type="match status" value="1"/>
</dbReference>
<dbReference type="PIRSF" id="PIRSF001438">
    <property type="entry name" value="4pyrrol_synth_OHMeBilane_synth"/>
    <property type="match status" value="1"/>
</dbReference>
<dbReference type="PRINTS" id="PR00151">
    <property type="entry name" value="PORPHBDMNASE"/>
</dbReference>
<dbReference type="SUPFAM" id="SSF53850">
    <property type="entry name" value="Periplasmic binding protein-like II"/>
    <property type="match status" value="1"/>
</dbReference>
<dbReference type="SUPFAM" id="SSF54782">
    <property type="entry name" value="Porphobilinogen deaminase (hydroxymethylbilane synthase), C-terminal domain"/>
    <property type="match status" value="1"/>
</dbReference>
<dbReference type="PROSITE" id="PS00533">
    <property type="entry name" value="PORPHOBILINOGEN_DEAM"/>
    <property type="match status" value="1"/>
</dbReference>
<protein>
    <recommendedName>
        <fullName>Porphobilinogen deaminase</fullName>
        <shortName>PBG</shortName>
        <ecNumber>2.5.1.61</ecNumber>
    </recommendedName>
    <alternativeName>
        <fullName>Hydroxymethylbilane synthase</fullName>
        <shortName>HMBS</shortName>
    </alternativeName>
    <alternativeName>
        <fullName>Pre-uroporphyrinogen synthase</fullName>
    </alternativeName>
</protein>
<feature type="chain" id="PRO_0000143042" description="Porphobilinogen deaminase">
    <location>
        <begin position="1"/>
        <end position="337"/>
    </location>
</feature>
<feature type="modified residue" description="S-(dipyrrolylmethanemethyl)cysteine" evidence="1">
    <location>
        <position position="254"/>
    </location>
</feature>
<accession>Q6MW51</accession>
<accession>A7UX94</accession>
<accession>Q7S791</accession>
<accession>V5ILR7</accession>
<organism>
    <name type="scientific">Neurospora crassa (strain ATCC 24698 / 74-OR23-1A / CBS 708.71 / DSM 1257 / FGSC 987)</name>
    <dbReference type="NCBI Taxonomy" id="367110"/>
    <lineage>
        <taxon>Eukaryota</taxon>
        <taxon>Fungi</taxon>
        <taxon>Dikarya</taxon>
        <taxon>Ascomycota</taxon>
        <taxon>Pezizomycotina</taxon>
        <taxon>Sordariomycetes</taxon>
        <taxon>Sordariomycetidae</taxon>
        <taxon>Sordariales</taxon>
        <taxon>Sordariaceae</taxon>
        <taxon>Neurospora</taxon>
    </lineage>
</organism>
<reference key="1">
    <citation type="journal article" date="2003" name="Nucleic Acids Res.">
        <title>What's in the genome of a filamentous fungus? Analysis of the Neurospora genome sequence.</title>
        <authorList>
            <person name="Mannhaupt G."/>
            <person name="Montrone C."/>
            <person name="Haase D."/>
            <person name="Mewes H.-W."/>
            <person name="Aign V."/>
            <person name="Hoheisel J.D."/>
            <person name="Fartmann B."/>
            <person name="Nyakatura G."/>
            <person name="Kempken F."/>
            <person name="Maier J."/>
            <person name="Schulte U."/>
        </authorList>
    </citation>
    <scope>NUCLEOTIDE SEQUENCE [LARGE SCALE GENOMIC DNA]</scope>
    <source>
        <strain>ATCC 24698 / 74-OR23-1A / CBS 708.71 / DSM 1257 / FGSC 987</strain>
    </source>
</reference>
<reference key="2">
    <citation type="journal article" date="2003" name="Nature">
        <title>The genome sequence of the filamentous fungus Neurospora crassa.</title>
        <authorList>
            <person name="Galagan J.E."/>
            <person name="Calvo S.E."/>
            <person name="Borkovich K.A."/>
            <person name="Selker E.U."/>
            <person name="Read N.D."/>
            <person name="Jaffe D.B."/>
            <person name="FitzHugh W."/>
            <person name="Ma L.-J."/>
            <person name="Smirnov S."/>
            <person name="Purcell S."/>
            <person name="Rehman B."/>
            <person name="Elkins T."/>
            <person name="Engels R."/>
            <person name="Wang S."/>
            <person name="Nielsen C.B."/>
            <person name="Butler J."/>
            <person name="Endrizzi M."/>
            <person name="Qui D."/>
            <person name="Ianakiev P."/>
            <person name="Bell-Pedersen D."/>
            <person name="Nelson M.A."/>
            <person name="Werner-Washburne M."/>
            <person name="Selitrennikoff C.P."/>
            <person name="Kinsey J.A."/>
            <person name="Braun E.L."/>
            <person name="Zelter A."/>
            <person name="Schulte U."/>
            <person name="Kothe G.O."/>
            <person name="Jedd G."/>
            <person name="Mewes H.-W."/>
            <person name="Staben C."/>
            <person name="Marcotte E."/>
            <person name="Greenberg D."/>
            <person name="Roy A."/>
            <person name="Foley K."/>
            <person name="Naylor J."/>
            <person name="Stange-Thomann N."/>
            <person name="Barrett R."/>
            <person name="Gnerre S."/>
            <person name="Kamal M."/>
            <person name="Kamvysselis M."/>
            <person name="Mauceli E.W."/>
            <person name="Bielke C."/>
            <person name="Rudd S."/>
            <person name="Frishman D."/>
            <person name="Krystofova S."/>
            <person name="Rasmussen C."/>
            <person name="Metzenberg R.L."/>
            <person name="Perkins D.D."/>
            <person name="Kroken S."/>
            <person name="Cogoni C."/>
            <person name="Macino G."/>
            <person name="Catcheside D.E.A."/>
            <person name="Li W."/>
            <person name="Pratt R.J."/>
            <person name="Osmani S.A."/>
            <person name="DeSouza C.P.C."/>
            <person name="Glass N.L."/>
            <person name="Orbach M.J."/>
            <person name="Berglund J.A."/>
            <person name="Voelker R."/>
            <person name="Yarden O."/>
            <person name="Plamann M."/>
            <person name="Seiler S."/>
            <person name="Dunlap J.C."/>
            <person name="Radford A."/>
            <person name="Aramayo R."/>
            <person name="Natvig D.O."/>
            <person name="Alex L.A."/>
            <person name="Mannhaupt G."/>
            <person name="Ebbole D.J."/>
            <person name="Freitag M."/>
            <person name="Paulsen I."/>
            <person name="Sachs M.S."/>
            <person name="Lander E.S."/>
            <person name="Nusbaum C."/>
            <person name="Birren B.W."/>
        </authorList>
    </citation>
    <scope>NUCLEOTIDE SEQUENCE [LARGE SCALE GENOMIC DNA]</scope>
    <source>
        <strain>ATCC 24698 / 74-OR23-1A / CBS 708.71 / DSM 1257 / FGSC 987</strain>
    </source>
</reference>
<name>HEM3_NEUCR</name>
<comment type="function">
    <text evidence="1">Tetrapolymerization of the monopyrrole PBG into the hydroxymethylbilane pre-uroporphyrinogen in several discrete steps.</text>
</comment>
<comment type="catalytic activity">
    <reaction>
        <text>4 porphobilinogen + H2O = hydroxymethylbilane + 4 NH4(+)</text>
        <dbReference type="Rhea" id="RHEA:13185"/>
        <dbReference type="ChEBI" id="CHEBI:15377"/>
        <dbReference type="ChEBI" id="CHEBI:28938"/>
        <dbReference type="ChEBI" id="CHEBI:57845"/>
        <dbReference type="ChEBI" id="CHEBI:58126"/>
        <dbReference type="EC" id="2.5.1.61"/>
    </reaction>
</comment>
<comment type="cofactor">
    <cofactor evidence="1">
        <name>dipyrromethane</name>
        <dbReference type="ChEBI" id="CHEBI:60342"/>
    </cofactor>
    <text evidence="1">Binds 1 dipyrromethane group covalently.</text>
</comment>
<comment type="pathway">
    <text>Porphyrin-containing compound metabolism; protoporphyrin-IX biosynthesis; coproporphyrinogen-III from 5-aminolevulinate: step 2/4.</text>
</comment>
<comment type="miscellaneous">
    <text>The porphobilinogen subunits are added to the dipyrromethan group.</text>
</comment>
<comment type="similarity">
    <text evidence="2">Belongs to the HMBS family.</text>
</comment>
<sequence>MSEQKETVHIGTRRSALALRQVDLVIAALQPHHPNVHFQVHALATLGDKNQTASLPSLGKGLWTNELEAKLFNKEVDFIVHCLKDMPTTLPEGGKIGVVTEREDPRDVVVMKKKWAEQGKYKSLADLPEGAIVGTSSVRRAAQLRRRYPGLVFKDVRGNIETRMRKCDEEDYDCIILAAAGLLRMGYDERIAQWLDSTTEGGGMLHAVGQGALAMEIREGDEKTLEIIKPLCHEKTMVATFAERAVMRTLEGGCSVPIGVETKWVGEDQLQLKVTVVSLDGKESVDGQSVEVIKTIEEAEAMGQKLAEDLAKRGAQKILDFVNQGRASGGALKIGDL</sequence>
<evidence type="ECO:0000250" key="1"/>
<evidence type="ECO:0000305" key="2"/>
<gene>
    <name type="primary">pda-1</name>
    <name type="synonym">hem3</name>
    <name type="ORF">B4B2.080</name>
    <name type="ORF">NCU08876</name>
    <name type="ORF">NCU10292</name>
</gene>